<keyword id="KW-0217">Developmental protein</keyword>
<keyword id="KW-0479">Metal-binding</keyword>
<keyword id="KW-1185">Reference proteome</keyword>
<keyword id="KW-0804">Transcription</keyword>
<keyword id="KW-0805">Transcription regulation</keyword>
<keyword id="KW-0862">Zinc</keyword>
<keyword id="KW-0863">Zinc-finger</keyword>
<organism>
    <name type="scientific">Oryza sativa subsp. japonica</name>
    <name type="common">Rice</name>
    <dbReference type="NCBI Taxonomy" id="39947"/>
    <lineage>
        <taxon>Eukaryota</taxon>
        <taxon>Viridiplantae</taxon>
        <taxon>Streptophyta</taxon>
        <taxon>Embryophyta</taxon>
        <taxon>Tracheophyta</taxon>
        <taxon>Spermatophyta</taxon>
        <taxon>Magnoliopsida</taxon>
        <taxon>Liliopsida</taxon>
        <taxon>Poales</taxon>
        <taxon>Poaceae</taxon>
        <taxon>BOP clade</taxon>
        <taxon>Oryzoideae</taxon>
        <taxon>Oryzeae</taxon>
        <taxon>Oryzinae</taxon>
        <taxon>Oryza</taxon>
        <taxon>Oryza sativa</taxon>
    </lineage>
</organism>
<name>PTC1_ORYSJ</name>
<protein>
    <recommendedName>
        <fullName evidence="3">PHD finger protein PERSISTENT TAPETAL CELL 1</fullName>
    </recommendedName>
</protein>
<gene>
    <name evidence="3" type="primary">PTC1</name>
    <name evidence="6" type="ordered locus">Os09g0449000</name>
    <name evidence="4" type="ordered locus">LOC_Os09g27620</name>
    <name evidence="7" type="ORF">OsJ_29577</name>
    <name evidence="5" type="ORF">P0047B10.27</name>
</gene>
<comment type="function">
    <text evidence="2">Probable transcriptional activator required for tapetal programmed cell death (PCD) and degeneration, and pollen development in anthers.</text>
</comment>
<comment type="developmental stage">
    <text evidence="2">Expressed specifically in tapetal cells and microspores during anther development in stages 8 and 9.</text>
</comment>
<comment type="disruption phenotype">
    <text evidence="2">Male sterility due to lack of tapetal programmed cell death (PCD), delayed tapetal degeneration, abnormal pollen wall formation and aborted microspore development.</text>
</comment>
<comment type="sequence caution" evidence="4">
    <conflict type="erroneous gene model prediction">
        <sequence resource="EMBL-CDS" id="BAT08370"/>
    </conflict>
</comment>
<feature type="chain" id="PRO_0000436459" description="PHD finger protein PERSISTENT TAPETAL CELL 1">
    <location>
        <begin position="1"/>
        <end position="679"/>
    </location>
</feature>
<feature type="zinc finger region" description="PHD-type" evidence="1">
    <location>
        <begin position="620"/>
        <end position="670"/>
    </location>
</feature>
<proteinExistence type="evidence at transcript level"/>
<dbReference type="EMBL" id="GU597363">
    <property type="protein sequence ID" value="ADD91695.1"/>
    <property type="molecule type" value="mRNA"/>
</dbReference>
<dbReference type="EMBL" id="AP005308">
    <property type="protein sequence ID" value="BAD37958.1"/>
    <property type="molecule type" value="Genomic_DNA"/>
</dbReference>
<dbReference type="EMBL" id="AP008215">
    <property type="protein sequence ID" value="BAF25233.2"/>
    <property type="molecule type" value="Genomic_DNA"/>
</dbReference>
<dbReference type="EMBL" id="AP014965">
    <property type="protein sequence ID" value="BAT08370.1"/>
    <property type="status" value="ALT_SEQ"/>
    <property type="molecule type" value="Genomic_DNA"/>
</dbReference>
<dbReference type="EMBL" id="CM000146">
    <property type="protein sequence ID" value="EAZ44935.1"/>
    <property type="molecule type" value="Genomic_DNA"/>
</dbReference>
<dbReference type="RefSeq" id="XP_015611522.1">
    <property type="nucleotide sequence ID" value="XM_015756036.1"/>
</dbReference>
<dbReference type="SMR" id="Q67V61"/>
<dbReference type="FunCoup" id="Q67V61">
    <property type="interactions" value="2615"/>
</dbReference>
<dbReference type="STRING" id="39947.Q67V61"/>
<dbReference type="PaxDb" id="39947-Q67V61"/>
<dbReference type="EnsemblPlants" id="Os09t0449000-01">
    <property type="protein sequence ID" value="Os09t0449000-01"/>
    <property type="gene ID" value="Os09g0449000"/>
</dbReference>
<dbReference type="Gramene" id="Os09t0449000-01">
    <property type="protein sequence ID" value="Os09t0449000-01"/>
    <property type="gene ID" value="Os09g0449000"/>
</dbReference>
<dbReference type="KEGG" id="dosa:Os09g0449000"/>
<dbReference type="eggNOG" id="KOG1844">
    <property type="taxonomic scope" value="Eukaryota"/>
</dbReference>
<dbReference type="HOGENOM" id="CLU_2190757_0_0_1"/>
<dbReference type="InParanoid" id="Q67V61"/>
<dbReference type="OrthoDB" id="436852at2759"/>
<dbReference type="Proteomes" id="UP000000763">
    <property type="component" value="Chromosome 9"/>
</dbReference>
<dbReference type="Proteomes" id="UP000007752">
    <property type="component" value="Chromosome 9"/>
</dbReference>
<dbReference type="Proteomes" id="UP000059680">
    <property type="component" value="Chromosome 9"/>
</dbReference>
<dbReference type="GO" id="GO:0005634">
    <property type="term" value="C:nucleus"/>
    <property type="evidence" value="ECO:0007669"/>
    <property type="project" value="EnsemblPlants"/>
</dbReference>
<dbReference type="GO" id="GO:0008270">
    <property type="term" value="F:zinc ion binding"/>
    <property type="evidence" value="ECO:0007669"/>
    <property type="project" value="UniProtKB-KW"/>
</dbReference>
<dbReference type="GO" id="GO:0048655">
    <property type="term" value="P:anther wall tapetum morphogenesis"/>
    <property type="evidence" value="ECO:0007669"/>
    <property type="project" value="EnsemblPlants"/>
</dbReference>
<dbReference type="GO" id="GO:0071367">
    <property type="term" value="P:cellular response to brassinosteroid stimulus"/>
    <property type="evidence" value="ECO:0007669"/>
    <property type="project" value="EnsemblPlants"/>
</dbReference>
<dbReference type="GO" id="GO:0055046">
    <property type="term" value="P:microgametogenesis"/>
    <property type="evidence" value="ECO:0007669"/>
    <property type="project" value="EnsemblPlants"/>
</dbReference>
<dbReference type="GO" id="GO:0009555">
    <property type="term" value="P:pollen development"/>
    <property type="evidence" value="ECO:0000315"/>
    <property type="project" value="UniProtKB"/>
</dbReference>
<dbReference type="GO" id="GO:0009846">
    <property type="term" value="P:pollen germination"/>
    <property type="evidence" value="ECO:0007669"/>
    <property type="project" value="EnsemblPlants"/>
</dbReference>
<dbReference type="GO" id="GO:0010208">
    <property type="term" value="P:pollen wall assembly"/>
    <property type="evidence" value="ECO:0007669"/>
    <property type="project" value="EnsemblPlants"/>
</dbReference>
<dbReference type="GO" id="GO:0045893">
    <property type="term" value="P:positive regulation of DNA-templated transcription"/>
    <property type="evidence" value="ECO:0007669"/>
    <property type="project" value="EnsemblPlants"/>
</dbReference>
<dbReference type="GO" id="GO:0043068">
    <property type="term" value="P:positive regulation of programmed cell death"/>
    <property type="evidence" value="ECO:0000315"/>
    <property type="project" value="UniProtKB"/>
</dbReference>
<dbReference type="CDD" id="cd15556">
    <property type="entry name" value="PHD_MMD1_like"/>
    <property type="match status" value="1"/>
</dbReference>
<dbReference type="Gene3D" id="3.30.40.10">
    <property type="entry name" value="Zinc/RING finger domain, C3HC4 (zinc finger)"/>
    <property type="match status" value="1"/>
</dbReference>
<dbReference type="InterPro" id="IPR020549">
    <property type="entry name" value="YbeY_CS"/>
</dbReference>
<dbReference type="InterPro" id="IPR019786">
    <property type="entry name" value="Zinc_finger_PHD-type_CS"/>
</dbReference>
<dbReference type="InterPro" id="IPR011011">
    <property type="entry name" value="Znf_FYVE_PHD"/>
</dbReference>
<dbReference type="InterPro" id="IPR001965">
    <property type="entry name" value="Znf_PHD"/>
</dbReference>
<dbReference type="InterPro" id="IPR019787">
    <property type="entry name" value="Znf_PHD-finger"/>
</dbReference>
<dbReference type="InterPro" id="IPR013083">
    <property type="entry name" value="Znf_RING/FYVE/PHD"/>
</dbReference>
<dbReference type="PANTHER" id="PTHR46201">
    <property type="entry name" value="PHD FINGER PROTEIN MALE MEIOCYTE DEATH 1-RELATED"/>
    <property type="match status" value="1"/>
</dbReference>
<dbReference type="PANTHER" id="PTHR46201:SF1">
    <property type="entry name" value="PHD FINGER PROTEIN MALE STERILITY 1"/>
    <property type="match status" value="1"/>
</dbReference>
<dbReference type="Pfam" id="PF00628">
    <property type="entry name" value="PHD"/>
    <property type="match status" value="1"/>
</dbReference>
<dbReference type="SMART" id="SM00249">
    <property type="entry name" value="PHD"/>
    <property type="match status" value="1"/>
</dbReference>
<dbReference type="SUPFAM" id="SSF57903">
    <property type="entry name" value="FYVE/PHD zinc finger"/>
    <property type="match status" value="1"/>
</dbReference>
<dbReference type="PROSITE" id="PS01306">
    <property type="entry name" value="UPF0054"/>
    <property type="match status" value="1"/>
</dbReference>
<dbReference type="PROSITE" id="PS01359">
    <property type="entry name" value="ZF_PHD_1"/>
    <property type="match status" value="1"/>
</dbReference>
<reference key="1">
    <citation type="journal article" date="2011" name="Plant Physiol.">
        <title>PERSISTENT TAPETAL CELL1 encodes a PHD-finger protein that is required for tapetal cell death and pollen development in rice.</title>
        <authorList>
            <person name="Li H."/>
            <person name="Yuan Z."/>
            <person name="Vizcay-Barrena G."/>
            <person name="Yang C."/>
            <person name="Liang W."/>
            <person name="Zong J."/>
            <person name="Wilson Z.A."/>
            <person name="Zhang D."/>
        </authorList>
    </citation>
    <scope>NUCLEOTIDE SEQUENCE [MRNA]</scope>
    <scope>FUNCTION</scope>
    <scope>DEVELOPMENTAL STAGE</scope>
    <scope>DISRUPTION PHENOTYPE</scope>
</reference>
<reference key="2">
    <citation type="journal article" date="2005" name="Nature">
        <title>The map-based sequence of the rice genome.</title>
        <authorList>
            <consortium name="International rice genome sequencing project (IRGSP)"/>
        </authorList>
    </citation>
    <scope>NUCLEOTIDE SEQUENCE [LARGE SCALE GENOMIC DNA]</scope>
    <source>
        <strain>cv. Nipponbare</strain>
    </source>
</reference>
<reference key="3">
    <citation type="journal article" date="2008" name="Nucleic Acids Res.">
        <title>The rice annotation project database (RAP-DB): 2008 update.</title>
        <authorList>
            <consortium name="The rice annotation project (RAP)"/>
        </authorList>
    </citation>
    <scope>GENOME REANNOTATION</scope>
    <source>
        <strain>cv. Nipponbare</strain>
    </source>
</reference>
<reference key="4">
    <citation type="journal article" date="2013" name="Rice">
        <title>Improvement of the Oryza sativa Nipponbare reference genome using next generation sequence and optical map data.</title>
        <authorList>
            <person name="Kawahara Y."/>
            <person name="de la Bastide M."/>
            <person name="Hamilton J.P."/>
            <person name="Kanamori H."/>
            <person name="McCombie W.R."/>
            <person name="Ouyang S."/>
            <person name="Schwartz D.C."/>
            <person name="Tanaka T."/>
            <person name="Wu J."/>
            <person name="Zhou S."/>
            <person name="Childs K.L."/>
            <person name="Davidson R.M."/>
            <person name="Lin H."/>
            <person name="Quesada-Ocampo L."/>
            <person name="Vaillancourt B."/>
            <person name="Sakai H."/>
            <person name="Lee S.S."/>
            <person name="Kim J."/>
            <person name="Numa H."/>
            <person name="Itoh T."/>
            <person name="Buell C.R."/>
            <person name="Matsumoto T."/>
        </authorList>
    </citation>
    <scope>GENOME REANNOTATION</scope>
    <source>
        <strain>cv. Nipponbare</strain>
    </source>
</reference>
<reference key="5">
    <citation type="journal article" date="2005" name="PLoS Biol.">
        <title>The genomes of Oryza sativa: a history of duplications.</title>
        <authorList>
            <person name="Yu J."/>
            <person name="Wang J."/>
            <person name="Lin W."/>
            <person name="Li S."/>
            <person name="Li H."/>
            <person name="Zhou J."/>
            <person name="Ni P."/>
            <person name="Dong W."/>
            <person name="Hu S."/>
            <person name="Zeng C."/>
            <person name="Zhang J."/>
            <person name="Zhang Y."/>
            <person name="Li R."/>
            <person name="Xu Z."/>
            <person name="Li S."/>
            <person name="Li X."/>
            <person name="Zheng H."/>
            <person name="Cong L."/>
            <person name="Lin L."/>
            <person name="Yin J."/>
            <person name="Geng J."/>
            <person name="Li G."/>
            <person name="Shi J."/>
            <person name="Liu J."/>
            <person name="Lv H."/>
            <person name="Li J."/>
            <person name="Wang J."/>
            <person name="Deng Y."/>
            <person name="Ran L."/>
            <person name="Shi X."/>
            <person name="Wang X."/>
            <person name="Wu Q."/>
            <person name="Li C."/>
            <person name="Ren X."/>
            <person name="Wang J."/>
            <person name="Wang X."/>
            <person name="Li D."/>
            <person name="Liu D."/>
            <person name="Zhang X."/>
            <person name="Ji Z."/>
            <person name="Zhao W."/>
            <person name="Sun Y."/>
            <person name="Zhang Z."/>
            <person name="Bao J."/>
            <person name="Han Y."/>
            <person name="Dong L."/>
            <person name="Ji J."/>
            <person name="Chen P."/>
            <person name="Wu S."/>
            <person name="Liu J."/>
            <person name="Xiao Y."/>
            <person name="Bu D."/>
            <person name="Tan J."/>
            <person name="Yang L."/>
            <person name="Ye C."/>
            <person name="Zhang J."/>
            <person name="Xu J."/>
            <person name="Zhou Y."/>
            <person name="Yu Y."/>
            <person name="Zhang B."/>
            <person name="Zhuang S."/>
            <person name="Wei H."/>
            <person name="Liu B."/>
            <person name="Lei M."/>
            <person name="Yu H."/>
            <person name="Li Y."/>
            <person name="Xu H."/>
            <person name="Wei S."/>
            <person name="He X."/>
            <person name="Fang L."/>
            <person name="Zhang Z."/>
            <person name="Zhang Y."/>
            <person name="Huang X."/>
            <person name="Su Z."/>
            <person name="Tong W."/>
            <person name="Li J."/>
            <person name="Tong Z."/>
            <person name="Li S."/>
            <person name="Ye J."/>
            <person name="Wang L."/>
            <person name="Fang L."/>
            <person name="Lei T."/>
            <person name="Chen C.-S."/>
            <person name="Chen H.-C."/>
            <person name="Xu Z."/>
            <person name="Li H."/>
            <person name="Huang H."/>
            <person name="Zhang F."/>
            <person name="Xu H."/>
            <person name="Li N."/>
            <person name="Zhao C."/>
            <person name="Li S."/>
            <person name="Dong L."/>
            <person name="Huang Y."/>
            <person name="Li L."/>
            <person name="Xi Y."/>
            <person name="Qi Q."/>
            <person name="Li W."/>
            <person name="Zhang B."/>
            <person name="Hu W."/>
            <person name="Zhang Y."/>
            <person name="Tian X."/>
            <person name="Jiao Y."/>
            <person name="Liang X."/>
            <person name="Jin J."/>
            <person name="Gao L."/>
            <person name="Zheng W."/>
            <person name="Hao B."/>
            <person name="Liu S.-M."/>
            <person name="Wang W."/>
            <person name="Yuan L."/>
            <person name="Cao M."/>
            <person name="McDermott J."/>
            <person name="Samudrala R."/>
            <person name="Wang J."/>
            <person name="Wong G.K.-S."/>
            <person name="Yang H."/>
        </authorList>
    </citation>
    <scope>NUCLEOTIDE SEQUENCE [LARGE SCALE GENOMIC DNA]</scope>
    <source>
        <strain>cv. Nipponbare</strain>
    </source>
</reference>
<accession>Q67V61</accession>
<accession>A0A0N7KQW7</accession>
<accession>Q0J1D2</accession>
<sequence length="679" mass="73763">MAPKMVISLGSSRRRKRGEMLFRFEAFCQPGYPANFAGAGGFRDNVRTLLGFAHLEAGVHGETKCWSFQLELHRHPPTVVRLFVVEEEVAASPHRQCHLCRHIGWGRHLICSKRYHFLLPRRESAAEADGLCFAINHGGGGGAEKASSKGTTTTASSRGHLLHGVVHLNGYGHLVALHGLEGGSDFVSGHQIMDLWDRICSALHVRTVSLVDTARKGHMELRLLHGVAYGETWFGRWGYRYGRPSYGVALPSYRQSLHVLGSMPLCVLVPHLSCFSQELPMVVTKYQAISGHKLLSLGDLLRFMLELRARLPATSVTAMDYRGIMSEASCRWSAKRVDMAARAVVDALRRAEPAARWVTRQEVRDAARAYIGDTGLLDFVLKSLGNHIVGNYVVRRTMNPVTKVLEYCLEDVSSVLPAVAAGGGVPAQGKMRVRFQLTRAQLMRDLVHLYRHVLKEPSQALTGGAFGAIPVAVRMVLDIKHFVKDYHEGQAAASSNGGGGFGHPHINLCCTLLVSNGSPELAPPYETVTLPAHATVGELKWEAQRVFSEMYLGLRSFAADSVVGVGADQEGLPVLGLVDVGSAVVVQGSVGEQINGEDHERKEEAAAAAVCEGSGGGERVVDCACGAVDDDGERMACCDICEAWQHTRCAGIADTEDAPHVFLCSRCDNDVVSFPSFNC</sequence>
<evidence type="ECO:0000255" key="1">
    <source>
        <dbReference type="PROSITE-ProRule" id="PRU00146"/>
    </source>
</evidence>
<evidence type="ECO:0000269" key="2">
    <source>
    </source>
</evidence>
<evidence type="ECO:0000303" key="3">
    <source>
    </source>
</evidence>
<evidence type="ECO:0000305" key="4"/>
<evidence type="ECO:0000312" key="5">
    <source>
        <dbReference type="EMBL" id="BAD37958.1"/>
    </source>
</evidence>
<evidence type="ECO:0000312" key="6">
    <source>
        <dbReference type="EMBL" id="BAF25233.2"/>
    </source>
</evidence>
<evidence type="ECO:0000312" key="7">
    <source>
        <dbReference type="EMBL" id="EAZ44935.1"/>
    </source>
</evidence>